<reference key="1">
    <citation type="submission" date="2007-11" db="EMBL/GenBank/DDBJ databases">
        <title>Complete sequence of Delftia acidovorans DSM 14801 / SPH-1.</title>
        <authorList>
            <person name="Copeland A."/>
            <person name="Lucas S."/>
            <person name="Lapidus A."/>
            <person name="Barry K."/>
            <person name="Glavina del Rio T."/>
            <person name="Dalin E."/>
            <person name="Tice H."/>
            <person name="Pitluck S."/>
            <person name="Lowry S."/>
            <person name="Clum A."/>
            <person name="Schmutz J."/>
            <person name="Larimer F."/>
            <person name="Land M."/>
            <person name="Hauser L."/>
            <person name="Kyrpides N."/>
            <person name="Kim E."/>
            <person name="Schleheck D."/>
            <person name="Richardson P."/>
        </authorList>
    </citation>
    <scope>NUCLEOTIDE SEQUENCE [LARGE SCALE GENOMIC DNA]</scope>
    <source>
        <strain>DSM 14801 / SPH-1</strain>
    </source>
</reference>
<proteinExistence type="inferred from homology"/>
<organism>
    <name type="scientific">Delftia acidovorans (strain DSM 14801 / SPH-1)</name>
    <dbReference type="NCBI Taxonomy" id="398578"/>
    <lineage>
        <taxon>Bacteria</taxon>
        <taxon>Pseudomonadati</taxon>
        <taxon>Pseudomonadota</taxon>
        <taxon>Betaproteobacteria</taxon>
        <taxon>Burkholderiales</taxon>
        <taxon>Comamonadaceae</taxon>
        <taxon>Delftia</taxon>
    </lineage>
</organism>
<comment type="catalytic activity">
    <reaction evidence="1">
        <text>(S)-2,3,4,5-tetrahydrodipicolinate + succinyl-CoA + H2O = (S)-2-succinylamino-6-oxoheptanedioate + CoA</text>
        <dbReference type="Rhea" id="RHEA:17325"/>
        <dbReference type="ChEBI" id="CHEBI:15377"/>
        <dbReference type="ChEBI" id="CHEBI:15685"/>
        <dbReference type="ChEBI" id="CHEBI:16845"/>
        <dbReference type="ChEBI" id="CHEBI:57287"/>
        <dbReference type="ChEBI" id="CHEBI:57292"/>
        <dbReference type="EC" id="2.3.1.117"/>
    </reaction>
</comment>
<comment type="pathway">
    <text evidence="1">Amino-acid biosynthesis; L-lysine biosynthesis via DAP pathway; LL-2,6-diaminopimelate from (S)-tetrahydrodipicolinate (succinylase route): step 1/3.</text>
</comment>
<comment type="subcellular location">
    <subcellularLocation>
        <location evidence="1">Cytoplasm</location>
    </subcellularLocation>
</comment>
<comment type="similarity">
    <text evidence="1">Belongs to the transferase hexapeptide repeat family.</text>
</comment>
<sequence length="274" mass="29253">MTQQLQSIIDTAWDNRASLSPAAAPKEVTEAVDHVIEALNNGQLRVATREGVGQWTVHQWIKKAVLLSFRLKDNVLMQSGDLNFFDKVPTKFAGMTEAEIAATGVRVVPPAVARRGSFVAKGAILMPSYVNIGAYVDEGTMVDTWATVGSCAQVGKNVHLSGGVGLGGVLEPLQANPTIIEDNCFIGARSEIVEGVIVEENSVISMGVYIGQSTPIYDRATGETSYGRVPAGSVVVSGNLPKDNGRYSMYAAIIVKKVDAKTRSTTSLNDLLRD</sequence>
<keyword id="KW-0012">Acyltransferase</keyword>
<keyword id="KW-0028">Amino-acid biosynthesis</keyword>
<keyword id="KW-0963">Cytoplasm</keyword>
<keyword id="KW-0220">Diaminopimelate biosynthesis</keyword>
<keyword id="KW-0457">Lysine biosynthesis</keyword>
<keyword id="KW-1185">Reference proteome</keyword>
<keyword id="KW-0677">Repeat</keyword>
<keyword id="KW-0808">Transferase</keyword>
<feature type="chain" id="PRO_1000134040" description="2,3,4,5-tetrahydropyridine-2,6-dicarboxylate N-succinyltransferase">
    <location>
        <begin position="1"/>
        <end position="274"/>
    </location>
</feature>
<dbReference type="EC" id="2.3.1.117" evidence="1"/>
<dbReference type="EMBL" id="CP000884">
    <property type="protein sequence ID" value="ABX36250.1"/>
    <property type="molecule type" value="Genomic_DNA"/>
</dbReference>
<dbReference type="RefSeq" id="WP_012205450.1">
    <property type="nucleotide sequence ID" value="NC_010002.1"/>
</dbReference>
<dbReference type="SMR" id="A9BZY8"/>
<dbReference type="STRING" id="398578.Daci_3616"/>
<dbReference type="GeneID" id="94692440"/>
<dbReference type="KEGG" id="dac:Daci_3616"/>
<dbReference type="eggNOG" id="COG2171">
    <property type="taxonomic scope" value="Bacteria"/>
</dbReference>
<dbReference type="HOGENOM" id="CLU_050859_0_1_4"/>
<dbReference type="UniPathway" id="UPA00034">
    <property type="reaction ID" value="UER00019"/>
</dbReference>
<dbReference type="Proteomes" id="UP000000784">
    <property type="component" value="Chromosome"/>
</dbReference>
<dbReference type="GO" id="GO:0005737">
    <property type="term" value="C:cytoplasm"/>
    <property type="evidence" value="ECO:0007669"/>
    <property type="project" value="UniProtKB-SubCell"/>
</dbReference>
<dbReference type="GO" id="GO:0008666">
    <property type="term" value="F:2,3,4,5-tetrahydropyridine-2,6-dicarboxylate N-succinyltransferase activity"/>
    <property type="evidence" value="ECO:0007669"/>
    <property type="project" value="UniProtKB-UniRule"/>
</dbReference>
<dbReference type="GO" id="GO:0016779">
    <property type="term" value="F:nucleotidyltransferase activity"/>
    <property type="evidence" value="ECO:0007669"/>
    <property type="project" value="TreeGrafter"/>
</dbReference>
<dbReference type="GO" id="GO:0019877">
    <property type="term" value="P:diaminopimelate biosynthetic process"/>
    <property type="evidence" value="ECO:0007669"/>
    <property type="project" value="UniProtKB-UniRule"/>
</dbReference>
<dbReference type="GO" id="GO:0009089">
    <property type="term" value="P:lysine biosynthetic process via diaminopimelate"/>
    <property type="evidence" value="ECO:0007669"/>
    <property type="project" value="UniProtKB-UniRule"/>
</dbReference>
<dbReference type="CDD" id="cd03350">
    <property type="entry name" value="LbH_THP_succinylT"/>
    <property type="match status" value="1"/>
</dbReference>
<dbReference type="Gene3D" id="2.160.10.10">
    <property type="entry name" value="Hexapeptide repeat proteins"/>
    <property type="match status" value="1"/>
</dbReference>
<dbReference type="Gene3D" id="1.10.166.10">
    <property type="entry name" value="Tetrahydrodipicolinate-N-succinyltransferase, N-terminal domain"/>
    <property type="match status" value="1"/>
</dbReference>
<dbReference type="HAMAP" id="MF_00811">
    <property type="entry name" value="DapD"/>
    <property type="match status" value="1"/>
</dbReference>
<dbReference type="InterPro" id="IPR005664">
    <property type="entry name" value="DapD_Trfase_Hexpep_rpt_fam"/>
</dbReference>
<dbReference type="InterPro" id="IPR001451">
    <property type="entry name" value="Hexapep"/>
</dbReference>
<dbReference type="InterPro" id="IPR018357">
    <property type="entry name" value="Hexapep_transf_CS"/>
</dbReference>
<dbReference type="InterPro" id="IPR023180">
    <property type="entry name" value="THP_succinylTrfase_dom1"/>
</dbReference>
<dbReference type="InterPro" id="IPR037133">
    <property type="entry name" value="THP_succinylTrfase_N_sf"/>
</dbReference>
<dbReference type="InterPro" id="IPR011004">
    <property type="entry name" value="Trimer_LpxA-like_sf"/>
</dbReference>
<dbReference type="NCBIfam" id="TIGR00965">
    <property type="entry name" value="dapD"/>
    <property type="match status" value="1"/>
</dbReference>
<dbReference type="NCBIfam" id="NF008808">
    <property type="entry name" value="PRK11830.1"/>
    <property type="match status" value="1"/>
</dbReference>
<dbReference type="PANTHER" id="PTHR19136:SF52">
    <property type="entry name" value="2,3,4,5-TETRAHYDROPYRIDINE-2,6-DICARBOXYLATE N-SUCCINYLTRANSFERASE"/>
    <property type="match status" value="1"/>
</dbReference>
<dbReference type="PANTHER" id="PTHR19136">
    <property type="entry name" value="MOLYBDENUM COFACTOR GUANYLYLTRANSFERASE"/>
    <property type="match status" value="1"/>
</dbReference>
<dbReference type="Pfam" id="PF14602">
    <property type="entry name" value="Hexapep_2"/>
    <property type="match status" value="1"/>
</dbReference>
<dbReference type="Pfam" id="PF14805">
    <property type="entry name" value="THDPS_N_2"/>
    <property type="match status" value="1"/>
</dbReference>
<dbReference type="SUPFAM" id="SSF51161">
    <property type="entry name" value="Trimeric LpxA-like enzymes"/>
    <property type="match status" value="1"/>
</dbReference>
<dbReference type="PROSITE" id="PS00101">
    <property type="entry name" value="HEXAPEP_TRANSFERASES"/>
    <property type="match status" value="1"/>
</dbReference>
<evidence type="ECO:0000255" key="1">
    <source>
        <dbReference type="HAMAP-Rule" id="MF_00811"/>
    </source>
</evidence>
<accession>A9BZY8</accession>
<name>DAPD_DELAS</name>
<protein>
    <recommendedName>
        <fullName evidence="1">2,3,4,5-tetrahydropyridine-2,6-dicarboxylate N-succinyltransferase</fullName>
        <ecNumber evidence="1">2.3.1.117</ecNumber>
    </recommendedName>
    <alternativeName>
        <fullName evidence="1">Tetrahydrodipicolinate N-succinyltransferase</fullName>
        <shortName evidence="1">THP succinyltransferase</shortName>
        <shortName evidence="1">Tetrahydropicolinate succinylase</shortName>
    </alternativeName>
</protein>
<gene>
    <name evidence="1" type="primary">dapD</name>
    <name type="ordered locus">Daci_3616</name>
</gene>